<reference key="1">
    <citation type="submission" date="2003-10" db="EMBL/GenBank/DDBJ databases">
        <title>The complete genome sequence of the alkaliphilic Bacillus clausii KSM-K16.</title>
        <authorList>
            <person name="Takaki Y."/>
            <person name="Kageyama Y."/>
            <person name="Shimamura S."/>
            <person name="Suzuki H."/>
            <person name="Nishi S."/>
            <person name="Hatada Y."/>
            <person name="Kawai S."/>
            <person name="Ito S."/>
            <person name="Horikoshi K."/>
        </authorList>
    </citation>
    <scope>NUCLEOTIDE SEQUENCE [LARGE SCALE GENOMIC DNA]</scope>
    <source>
        <strain>KSM-K16</strain>
    </source>
</reference>
<feature type="chain" id="PRO_0000223732" description="Acetyl-coenzyme A carboxylase carboxyl transferase subunit alpha">
    <location>
        <begin position="1"/>
        <end position="324"/>
    </location>
</feature>
<feature type="domain" description="CoA carboxyltransferase C-terminal" evidence="2">
    <location>
        <begin position="42"/>
        <end position="296"/>
    </location>
</feature>
<sequence>MSSEQEFEKPVIELRQKIADLRAFAMERDMDLSTEIKKMEARLSELEEEVYANLQPWERVQIARDHERPTTLDYVDVLFEDFLEMHGDRLFGDDKAIVGGIATYKGKPVTVIGHQRGKDTKENIVRYFGSPHPEGYRKALRLMKQAEKFKRPIICFIDTKGAYPGKAAEERGQSEAIARNLLEMAGLKVPTISIVIGEGGSGGALALGVADEIHMLENATYSVISPEGAAAILWKDAGKAKKAAESMRITAPDLYELGIIDSIIPEPRGGAQRNLHQQADEIDRLLEKALTRLAEKPVDVLLDERYEKFMKIGHIPEEAATTGQ</sequence>
<comment type="function">
    <text evidence="1">Component of the acetyl coenzyme A carboxylase (ACC) complex. First, biotin carboxylase catalyzes the carboxylation of biotin on its carrier protein (BCCP) and then the CO(2) group is transferred by the carboxyltransferase to acetyl-CoA to form malonyl-CoA.</text>
</comment>
<comment type="catalytic activity">
    <reaction evidence="1">
        <text>N(6)-carboxybiotinyl-L-lysyl-[protein] + acetyl-CoA = N(6)-biotinyl-L-lysyl-[protein] + malonyl-CoA</text>
        <dbReference type="Rhea" id="RHEA:54728"/>
        <dbReference type="Rhea" id="RHEA-COMP:10505"/>
        <dbReference type="Rhea" id="RHEA-COMP:10506"/>
        <dbReference type="ChEBI" id="CHEBI:57288"/>
        <dbReference type="ChEBI" id="CHEBI:57384"/>
        <dbReference type="ChEBI" id="CHEBI:83144"/>
        <dbReference type="ChEBI" id="CHEBI:83145"/>
        <dbReference type="EC" id="2.1.3.15"/>
    </reaction>
</comment>
<comment type="pathway">
    <text evidence="1">Lipid metabolism; malonyl-CoA biosynthesis; malonyl-CoA from acetyl-CoA: step 1/1.</text>
</comment>
<comment type="subunit">
    <text evidence="1">Acetyl-CoA carboxylase is a heterohexamer composed of biotin carboxyl carrier protein (AccB), biotin carboxylase (AccC) and two subunits each of ACCase subunit alpha (AccA) and ACCase subunit beta (AccD).</text>
</comment>
<comment type="subcellular location">
    <subcellularLocation>
        <location evidence="1">Cytoplasm</location>
    </subcellularLocation>
</comment>
<comment type="similarity">
    <text evidence="1">Belongs to the AccA family.</text>
</comment>
<name>ACCA_SHOC1</name>
<evidence type="ECO:0000255" key="1">
    <source>
        <dbReference type="HAMAP-Rule" id="MF_00823"/>
    </source>
</evidence>
<evidence type="ECO:0000255" key="2">
    <source>
        <dbReference type="PROSITE-ProRule" id="PRU01137"/>
    </source>
</evidence>
<protein>
    <recommendedName>
        <fullName evidence="1">Acetyl-coenzyme A carboxylase carboxyl transferase subunit alpha</fullName>
        <shortName evidence="1">ACCase subunit alpha</shortName>
        <shortName evidence="1">Acetyl-CoA carboxylase carboxyltransferase subunit alpha</shortName>
        <ecNumber evidence="1">2.1.3.15</ecNumber>
    </recommendedName>
</protein>
<organism>
    <name type="scientific">Shouchella clausii (strain KSM-K16)</name>
    <name type="common">Alkalihalobacillus clausii</name>
    <dbReference type="NCBI Taxonomy" id="66692"/>
    <lineage>
        <taxon>Bacteria</taxon>
        <taxon>Bacillati</taxon>
        <taxon>Bacillota</taxon>
        <taxon>Bacilli</taxon>
        <taxon>Bacillales</taxon>
        <taxon>Bacillaceae</taxon>
        <taxon>Shouchella</taxon>
    </lineage>
</organism>
<proteinExistence type="inferred from homology"/>
<accession>Q5WEF5</accession>
<keyword id="KW-0067">ATP-binding</keyword>
<keyword id="KW-0963">Cytoplasm</keyword>
<keyword id="KW-0275">Fatty acid biosynthesis</keyword>
<keyword id="KW-0276">Fatty acid metabolism</keyword>
<keyword id="KW-0444">Lipid biosynthesis</keyword>
<keyword id="KW-0443">Lipid metabolism</keyword>
<keyword id="KW-0547">Nucleotide-binding</keyword>
<keyword id="KW-1185">Reference proteome</keyword>
<keyword id="KW-0808">Transferase</keyword>
<gene>
    <name evidence="1" type="primary">accA</name>
    <name type="ordered locus">ABC2720</name>
</gene>
<dbReference type="EC" id="2.1.3.15" evidence="1"/>
<dbReference type="EMBL" id="AP006627">
    <property type="protein sequence ID" value="BAD65255.1"/>
    <property type="molecule type" value="Genomic_DNA"/>
</dbReference>
<dbReference type="RefSeq" id="WP_011247563.1">
    <property type="nucleotide sequence ID" value="NC_006582.1"/>
</dbReference>
<dbReference type="SMR" id="Q5WEF5"/>
<dbReference type="STRING" id="66692.ABC2720"/>
<dbReference type="KEGG" id="bcl:ABC2720"/>
<dbReference type="eggNOG" id="COG0825">
    <property type="taxonomic scope" value="Bacteria"/>
</dbReference>
<dbReference type="HOGENOM" id="CLU_015486_0_2_9"/>
<dbReference type="OrthoDB" id="9808023at2"/>
<dbReference type="UniPathway" id="UPA00655">
    <property type="reaction ID" value="UER00711"/>
</dbReference>
<dbReference type="Proteomes" id="UP000001168">
    <property type="component" value="Chromosome"/>
</dbReference>
<dbReference type="GO" id="GO:0009317">
    <property type="term" value="C:acetyl-CoA carboxylase complex"/>
    <property type="evidence" value="ECO:0007669"/>
    <property type="project" value="InterPro"/>
</dbReference>
<dbReference type="GO" id="GO:0003989">
    <property type="term" value="F:acetyl-CoA carboxylase activity"/>
    <property type="evidence" value="ECO:0007669"/>
    <property type="project" value="InterPro"/>
</dbReference>
<dbReference type="GO" id="GO:0005524">
    <property type="term" value="F:ATP binding"/>
    <property type="evidence" value="ECO:0007669"/>
    <property type="project" value="UniProtKB-KW"/>
</dbReference>
<dbReference type="GO" id="GO:0016743">
    <property type="term" value="F:carboxyl- or carbamoyltransferase activity"/>
    <property type="evidence" value="ECO:0007669"/>
    <property type="project" value="UniProtKB-UniRule"/>
</dbReference>
<dbReference type="GO" id="GO:0006633">
    <property type="term" value="P:fatty acid biosynthetic process"/>
    <property type="evidence" value="ECO:0007669"/>
    <property type="project" value="UniProtKB-KW"/>
</dbReference>
<dbReference type="GO" id="GO:2001295">
    <property type="term" value="P:malonyl-CoA biosynthetic process"/>
    <property type="evidence" value="ECO:0007669"/>
    <property type="project" value="UniProtKB-UniRule"/>
</dbReference>
<dbReference type="Gene3D" id="3.90.226.10">
    <property type="entry name" value="2-enoyl-CoA Hydratase, Chain A, domain 1"/>
    <property type="match status" value="1"/>
</dbReference>
<dbReference type="HAMAP" id="MF_00823">
    <property type="entry name" value="AcetylCoA_CT_alpha"/>
    <property type="match status" value="1"/>
</dbReference>
<dbReference type="InterPro" id="IPR001095">
    <property type="entry name" value="Acetyl_CoA_COase_a_su"/>
</dbReference>
<dbReference type="InterPro" id="IPR029045">
    <property type="entry name" value="ClpP/crotonase-like_dom_sf"/>
</dbReference>
<dbReference type="InterPro" id="IPR011763">
    <property type="entry name" value="COA_CT_C"/>
</dbReference>
<dbReference type="NCBIfam" id="TIGR00513">
    <property type="entry name" value="accA"/>
    <property type="match status" value="1"/>
</dbReference>
<dbReference type="NCBIfam" id="NF041504">
    <property type="entry name" value="AccA_sub"/>
    <property type="match status" value="1"/>
</dbReference>
<dbReference type="NCBIfam" id="NF004344">
    <property type="entry name" value="PRK05724.1"/>
    <property type="match status" value="1"/>
</dbReference>
<dbReference type="PANTHER" id="PTHR42853">
    <property type="entry name" value="ACETYL-COENZYME A CARBOXYLASE CARBOXYL TRANSFERASE SUBUNIT ALPHA"/>
    <property type="match status" value="1"/>
</dbReference>
<dbReference type="PANTHER" id="PTHR42853:SF3">
    <property type="entry name" value="ACETYL-COENZYME A CARBOXYLASE CARBOXYL TRANSFERASE SUBUNIT ALPHA, CHLOROPLASTIC"/>
    <property type="match status" value="1"/>
</dbReference>
<dbReference type="Pfam" id="PF03255">
    <property type="entry name" value="ACCA"/>
    <property type="match status" value="1"/>
</dbReference>
<dbReference type="PRINTS" id="PR01069">
    <property type="entry name" value="ACCCTRFRASEA"/>
</dbReference>
<dbReference type="SUPFAM" id="SSF52096">
    <property type="entry name" value="ClpP/crotonase"/>
    <property type="match status" value="1"/>
</dbReference>
<dbReference type="PROSITE" id="PS50989">
    <property type="entry name" value="COA_CT_CTER"/>
    <property type="match status" value="1"/>
</dbReference>